<accession>A0A3Q7ZPG5</accession>
<dbReference type="EMBL" id="KF516233">
    <property type="protein sequence ID" value="AII20594.1"/>
    <property type="molecule type" value="mRNA"/>
</dbReference>
<dbReference type="SMR" id="A0A3Q7ZPG5"/>
<dbReference type="GO" id="GO:0005794">
    <property type="term" value="C:Golgi apparatus"/>
    <property type="evidence" value="ECO:0007669"/>
    <property type="project" value="UniProtKB-SubCell"/>
</dbReference>
<dbReference type="GO" id="GO:0005739">
    <property type="term" value="C:mitochondrion"/>
    <property type="evidence" value="ECO:0007669"/>
    <property type="project" value="UniProtKB-SubCell"/>
</dbReference>
<dbReference type="GO" id="GO:0005634">
    <property type="term" value="C:nucleus"/>
    <property type="evidence" value="ECO:0000250"/>
    <property type="project" value="UniProtKB"/>
</dbReference>
<dbReference type="GO" id="GO:0048471">
    <property type="term" value="C:perinuclear region of cytoplasm"/>
    <property type="evidence" value="ECO:0000314"/>
    <property type="project" value="UniProtKB"/>
</dbReference>
<dbReference type="GO" id="GO:0005886">
    <property type="term" value="C:plasma membrane"/>
    <property type="evidence" value="ECO:0000314"/>
    <property type="project" value="UniProtKB"/>
</dbReference>
<dbReference type="GO" id="GO:0005497">
    <property type="term" value="F:androgen binding"/>
    <property type="evidence" value="ECO:0000314"/>
    <property type="project" value="UniProtKB"/>
</dbReference>
<dbReference type="GO" id="GO:0004930">
    <property type="term" value="F:G protein-coupled receptor activity"/>
    <property type="evidence" value="ECO:0000314"/>
    <property type="project" value="UniProtKB"/>
</dbReference>
<dbReference type="GO" id="GO:0005385">
    <property type="term" value="F:zinc ion transmembrane transporter activity"/>
    <property type="evidence" value="ECO:0000315"/>
    <property type="project" value="UniProtKB"/>
</dbReference>
<dbReference type="GO" id="GO:0006882">
    <property type="term" value="P:intracellular zinc ion homeostasis"/>
    <property type="evidence" value="ECO:0000314"/>
    <property type="project" value="UniProtKB"/>
</dbReference>
<dbReference type="GO" id="GO:0071577">
    <property type="term" value="P:zinc ion transmembrane transport"/>
    <property type="evidence" value="ECO:0000250"/>
    <property type="project" value="UniProtKB"/>
</dbReference>
<dbReference type="InterPro" id="IPR003689">
    <property type="entry name" value="ZIP"/>
</dbReference>
<dbReference type="InterPro" id="IPR045891">
    <property type="entry name" value="ZIP9"/>
</dbReference>
<dbReference type="PANTHER" id="PTHR16133">
    <property type="entry name" value="SOLUTE CARRIER FAMILY 39 ZINC TRANSPORTER , MEMBER 9-RELATED"/>
    <property type="match status" value="1"/>
</dbReference>
<dbReference type="PANTHER" id="PTHR16133:SF5">
    <property type="entry name" value="ZINC TRANSPORTER ZIP9"/>
    <property type="match status" value="1"/>
</dbReference>
<dbReference type="Pfam" id="PF02535">
    <property type="entry name" value="Zip"/>
    <property type="match status" value="1"/>
</dbReference>
<name>S39A9_MICUN</name>
<keyword id="KW-1003">Cell membrane</keyword>
<keyword id="KW-0963">Cytoplasm</keyword>
<keyword id="KW-0333">Golgi apparatus</keyword>
<keyword id="KW-0406">Ion transport</keyword>
<keyword id="KW-0472">Membrane</keyword>
<keyword id="KW-0496">Mitochondrion</keyword>
<keyword id="KW-0539">Nucleus</keyword>
<keyword id="KW-0675">Receptor</keyword>
<keyword id="KW-0812">Transmembrane</keyword>
<keyword id="KW-1133">Transmembrane helix</keyword>
<keyword id="KW-0813">Transport</keyword>
<keyword id="KW-0862">Zinc</keyword>
<keyword id="KW-0864">Zinc transport</keyword>
<evidence type="ECO:0000250" key="1">
    <source>
        <dbReference type="UniProtKB" id="Q9NUM3"/>
    </source>
</evidence>
<evidence type="ECO:0000255" key="2"/>
<evidence type="ECO:0000269" key="3">
    <source>
    </source>
</evidence>
<evidence type="ECO:0000269" key="4">
    <source>
    </source>
</evidence>
<evidence type="ECO:0000305" key="5"/>
<evidence type="ECO:0000305" key="6">
    <source>
    </source>
</evidence>
<gene>
    <name evidence="1" type="primary">slc39a9</name>
</gene>
<protein>
    <recommendedName>
        <fullName evidence="1">Zinc transporter ZIP9</fullName>
        <shortName>ZIP-9</shortName>
    </recommendedName>
    <alternativeName>
        <fullName>Solute carrier family 39 member 9</fullName>
    </alternativeName>
    <alternativeName>
        <fullName>Zrt- and Irt-like protein 9</fullName>
    </alternativeName>
</protein>
<organism>
    <name type="scientific">Micropogonias undulatus</name>
    <name type="common">Atlantic croaker</name>
    <dbReference type="NCBI Taxonomy" id="29154"/>
    <lineage>
        <taxon>Eukaryota</taxon>
        <taxon>Metazoa</taxon>
        <taxon>Chordata</taxon>
        <taxon>Craniata</taxon>
        <taxon>Vertebrata</taxon>
        <taxon>Euteleostomi</taxon>
        <taxon>Actinopterygii</taxon>
        <taxon>Neopterygii</taxon>
        <taxon>Teleostei</taxon>
        <taxon>Neoteleostei</taxon>
        <taxon>Acanthomorphata</taxon>
        <taxon>Eupercaria</taxon>
        <taxon>Sciaenidae</taxon>
        <taxon>Micropogonias</taxon>
    </lineage>
</organism>
<feature type="chain" id="PRO_0000457179" description="Zinc transporter ZIP9">
    <location>
        <begin position="1"/>
        <end position="310"/>
    </location>
</feature>
<feature type="transmembrane region" description="Helical" evidence="2">
    <location>
        <begin position="7"/>
        <end position="27"/>
    </location>
</feature>
<feature type="transmembrane region" description="Helical" evidence="2">
    <location>
        <begin position="35"/>
        <end position="55"/>
    </location>
</feature>
<feature type="transmembrane region" description="Helical" evidence="2">
    <location>
        <begin position="108"/>
        <end position="128"/>
    </location>
</feature>
<feature type="transmembrane region" description="Helical" evidence="2">
    <location>
        <begin position="148"/>
        <end position="168"/>
    </location>
</feature>
<feature type="transmembrane region" description="Helical" evidence="2">
    <location>
        <begin position="178"/>
        <end position="198"/>
    </location>
</feature>
<feature type="transmembrane region" description="Helical" evidence="2">
    <location>
        <begin position="212"/>
        <end position="232"/>
    </location>
</feature>
<feature type="transmembrane region" description="Helical" evidence="2">
    <location>
        <begin position="246"/>
        <end position="266"/>
    </location>
</feature>
<feature type="transmembrane region" description="Helical" evidence="2">
    <location>
        <begin position="289"/>
        <end position="309"/>
    </location>
</feature>
<proteinExistence type="evidence at protein level"/>
<reference key="1">
    <citation type="journal article" date="2014" name="Endocrinology">
        <title>Identification and characterization of membrane androgen receptors in the ZIP9 zinc transporter subfamily: I. Discovery in female atlantic croaker and evidence ZIP9 mediates testosterone-induced apoptosis of ovarian follicle cells.</title>
        <authorList>
            <person name="Berg A.H."/>
            <person name="Rice C.D."/>
            <person name="Rahman M.S."/>
            <person name="Dong J."/>
            <person name="Thomas P."/>
        </authorList>
    </citation>
    <scope>NUCLEOTIDE SEQUENCE [MRNA]</scope>
    <scope>FUNCTION</scope>
    <scope>CATALYTIC ACTIVITY</scope>
    <scope>TISSUE SPECIFICITY</scope>
    <scope>INDUCTION</scope>
    <scope>SUBCELLULAR LOCATION</scope>
</reference>
<reference key="2">
    <citation type="journal article" date="2017" name="Endocrinology">
        <title>Membrane Androgen Receptor ZIP9 Induces Croaker Ovarian Cell Apoptosis via Stimulatory G Protein Alpha Subunit and MAP Kinase Signaling.</title>
        <authorList>
            <person name="Converse A."/>
            <person name="Zhang C."/>
            <person name="Thomas P."/>
        </authorList>
    </citation>
    <scope>FUNCTION</scope>
    <scope>TRANSPORTER ACTIVITY</scope>
</reference>
<comment type="function">
    <text evidence="3 4">Has dual functions as a membrane-bound androgen receptor and as an androgen-dependent zinc transporter both of which are mediated through G protein activation and are required for the androgen-dependent apoptotic response (PubMed:25014354, PubMed:28633436). Upon androgen binding, mediates apoptosis by directly activating a stimulatory G protein that leads to increased cAMP levels and MAP kinase activity and which is accompanied by increased intracellular free zinc levels (PubMed:25014354, PubMed:28633436).</text>
</comment>
<comment type="catalytic activity">
    <reaction evidence="6">
        <text>Zn(2+)(in) = Zn(2+)(out)</text>
        <dbReference type="Rhea" id="RHEA:29351"/>
        <dbReference type="ChEBI" id="CHEBI:29105"/>
    </reaction>
</comment>
<comment type="subcellular location">
    <subcellularLocation>
        <location evidence="1">Golgi apparatus</location>
        <location evidence="1">trans-Golgi network membrane</location>
    </subcellularLocation>
    <subcellularLocation>
        <location evidence="1">Cell membrane</location>
        <topology evidence="1">Multi-pass membrane protein</topology>
    </subcellularLocation>
    <subcellularLocation>
        <location evidence="1">Cytoplasm</location>
        <location evidence="1">Perinuclear region</location>
    </subcellularLocation>
    <subcellularLocation>
        <location evidence="1">Mitochondrion</location>
    </subcellularLocation>
    <subcellularLocation>
        <location evidence="1">Nucleus</location>
    </subcellularLocation>
</comment>
<comment type="tissue specificity">
    <text evidence="3">Expressed in brain, liver, ovary, and testis.</text>
</comment>
<comment type="induction">
    <text evidence="3">Up-regulated in the ovary by reproductive hormones.</text>
</comment>
<comment type="similarity">
    <text evidence="5">Belongs to the ZIP transporter (TC 2.A.5) family.</text>
</comment>
<sequence length="310" mass="31771">MDDFSSISLLSVAMLVGCYVAGTIPLAVNFSEEKLKLITVLGAGLLCGTALAVIIPEGVHAIYEEILEGGHHSHGQAGVVEVSEAKGDAESVLSGGGKHEHSHEQLHACIGVSLVLGFVFMLLVDQIGSSHVHSTEDPESARVTSSKITTTLGLVVHAAADGVALGAAASTSQTSVQLIVFVAIMLHKAPAAFGLVSFLMHAGLERNRIRKHLLVFALAAPVLAMLTFLGLSQSSKEALSDINATGVAMLFSAGTFLYVATVHVLPEVGGGGHSHAASGGNGGKGLSKVEVVALVLGCLIPLVLSVGHHH</sequence>